<protein>
    <recommendedName>
        <fullName>P34 probable thiol protease</fullName>
        <ecNumber evidence="2">3.4.22.-</ecNumber>
    </recommendedName>
</protein>
<feature type="signal peptide" evidence="3">
    <location>
        <begin position="1"/>
        <end position="23"/>
    </location>
</feature>
<feature type="propeptide" id="PRO_0000026471" description="Activation peptide" evidence="8">
    <location>
        <begin position="24"/>
        <end position="122"/>
    </location>
</feature>
<feature type="chain" id="PRO_0000026472" description="P34 probable thiol protease">
    <location>
        <begin position="123"/>
        <end position="379"/>
    </location>
</feature>
<feature type="active site" evidence="5">
    <location>
        <position position="301"/>
    </location>
</feature>
<feature type="active site" evidence="6">
    <location>
        <position position="321"/>
    </location>
</feature>
<feature type="site" description="Ancestral active site">
    <location>
        <position position="200"/>
    </location>
</feature>
<feature type="glycosylation site" description="N-linked (GlcNAc...) asparagine" evidence="4">
    <location>
        <position position="70"/>
    </location>
</feature>
<feature type="glycosylation site" description="N-linked (GlcNAc...) asparagine" evidence="4">
    <location>
        <position position="292"/>
    </location>
</feature>
<feature type="disulfide bond" evidence="1">
    <location>
        <begin position="190"/>
        <end position="230"/>
    </location>
</feature>
<feature type="disulfide bond" evidence="1">
    <location>
        <begin position="293"/>
        <end position="346"/>
    </location>
</feature>
<name>P34_SOYBN</name>
<dbReference type="EC" id="3.4.22.-" evidence="2"/>
<dbReference type="EMBL" id="J05560">
    <property type="protein sequence ID" value="AAB09252.1"/>
    <property type="status" value="ALT_SEQ"/>
    <property type="molecule type" value="mRNA"/>
</dbReference>
<dbReference type="PIR" id="A37126">
    <property type="entry name" value="KHSYO4"/>
</dbReference>
<dbReference type="RefSeq" id="NP_001238219.1">
    <property type="nucleotide sequence ID" value="NM_001251290.1"/>
</dbReference>
<dbReference type="SMR" id="P22895"/>
<dbReference type="STRING" id="3847.P22895"/>
<dbReference type="Allergome" id="1103">
    <property type="allergen name" value="Gly m Bd30K"/>
</dbReference>
<dbReference type="MEROPS" id="I29.003"/>
<dbReference type="PaxDb" id="3847-GLYMA08G12270.1"/>
<dbReference type="GeneID" id="548062"/>
<dbReference type="KEGG" id="gmx:548062"/>
<dbReference type="eggNOG" id="KOG1543">
    <property type="taxonomic scope" value="Eukaryota"/>
</dbReference>
<dbReference type="InParanoid" id="P22895"/>
<dbReference type="OrthoDB" id="1404853at2759"/>
<dbReference type="Proteomes" id="UP000008827">
    <property type="component" value="Unplaced"/>
</dbReference>
<dbReference type="GO" id="GO:0005615">
    <property type="term" value="C:extracellular space"/>
    <property type="evidence" value="ECO:0000318"/>
    <property type="project" value="GO_Central"/>
</dbReference>
<dbReference type="GO" id="GO:0005764">
    <property type="term" value="C:lysosome"/>
    <property type="evidence" value="ECO:0000318"/>
    <property type="project" value="GO_Central"/>
</dbReference>
<dbReference type="GO" id="GO:0004197">
    <property type="term" value="F:cysteine-type endopeptidase activity"/>
    <property type="evidence" value="ECO:0000318"/>
    <property type="project" value="GO_Central"/>
</dbReference>
<dbReference type="GO" id="GO:0051603">
    <property type="term" value="P:proteolysis involved in protein catabolic process"/>
    <property type="evidence" value="ECO:0000318"/>
    <property type="project" value="GO_Central"/>
</dbReference>
<dbReference type="CDD" id="cd02248">
    <property type="entry name" value="Peptidase_C1A"/>
    <property type="match status" value="1"/>
</dbReference>
<dbReference type="FunFam" id="3.90.70.10:FF:000138">
    <property type="entry name" value="Cruzipain"/>
    <property type="match status" value="1"/>
</dbReference>
<dbReference type="FunFam" id="1.10.287.2250:FF:000007">
    <property type="entry name" value="P34 probable thiol protease"/>
    <property type="match status" value="1"/>
</dbReference>
<dbReference type="Gene3D" id="1.10.287.2250">
    <property type="match status" value="1"/>
</dbReference>
<dbReference type="Gene3D" id="3.90.70.10">
    <property type="entry name" value="Cysteine proteinases"/>
    <property type="match status" value="1"/>
</dbReference>
<dbReference type="InterPro" id="IPR038765">
    <property type="entry name" value="Papain-like_cys_pep_sf"/>
</dbReference>
<dbReference type="InterPro" id="IPR025661">
    <property type="entry name" value="Pept_asp_AS"/>
</dbReference>
<dbReference type="InterPro" id="IPR013128">
    <property type="entry name" value="Peptidase_C1A"/>
</dbReference>
<dbReference type="InterPro" id="IPR000668">
    <property type="entry name" value="Peptidase_C1A_C"/>
</dbReference>
<dbReference type="InterPro" id="IPR039417">
    <property type="entry name" value="Peptidase_C1A_papain-like"/>
</dbReference>
<dbReference type="InterPro" id="IPR013201">
    <property type="entry name" value="Prot_inhib_I29"/>
</dbReference>
<dbReference type="PANTHER" id="PTHR12411">
    <property type="entry name" value="CYSTEINE PROTEASE FAMILY C1-RELATED"/>
    <property type="match status" value="1"/>
</dbReference>
<dbReference type="Pfam" id="PF08246">
    <property type="entry name" value="Inhibitor_I29"/>
    <property type="match status" value="1"/>
</dbReference>
<dbReference type="Pfam" id="PF00112">
    <property type="entry name" value="Peptidase_C1"/>
    <property type="match status" value="1"/>
</dbReference>
<dbReference type="PRINTS" id="PR00705">
    <property type="entry name" value="PAPAIN"/>
</dbReference>
<dbReference type="SMART" id="SM00848">
    <property type="entry name" value="Inhibitor_I29"/>
    <property type="match status" value="1"/>
</dbReference>
<dbReference type="SMART" id="SM00645">
    <property type="entry name" value="Pept_C1"/>
    <property type="match status" value="1"/>
</dbReference>
<dbReference type="SUPFAM" id="SSF54001">
    <property type="entry name" value="Cysteine proteinases"/>
    <property type="match status" value="1"/>
</dbReference>
<dbReference type="PROSITE" id="PS00640">
    <property type="entry name" value="THIOL_PROTEASE_ASN"/>
    <property type="match status" value="1"/>
</dbReference>
<proteinExistence type="evidence at protein level"/>
<reference key="1">
    <citation type="journal article" date="1990" name="J. Biol. Chem.">
        <title>Molecular cloning of a protein associated with soybean seed oil bodies that is similar to thiol proteases of the papain family.</title>
        <authorList>
            <person name="Kalinski A."/>
            <person name="Weisemann J.M."/>
            <person name="Matthews B.F."/>
            <person name="Herman E.M."/>
        </authorList>
    </citation>
    <scope>NUCLEOTIDE SEQUENCE [MRNA]</scope>
    <scope>PROTEIN SEQUENCE OF 123-147</scope>
    <source>
        <strain>cv. Century</strain>
        <tissue>Seed</tissue>
    </source>
</reference>
<reference key="2">
    <citation type="journal article" date="1992" name="J. Biol. Chem.">
        <title>A soybean vacuolar protein (P34) related to thiol proteases is synthesized as a glycoprotein precursor during seed maturation.</title>
        <authorList>
            <person name="Kalinski A."/>
            <person name="Melroy D.L."/>
            <person name="Dwivedi R.S."/>
            <person name="Herman E.M."/>
        </authorList>
    </citation>
    <scope>PROTEOLYTIC PROCESSING</scope>
    <scope>SUBCELLULAR LOCATION</scope>
</reference>
<accession>P22895</accession>
<evidence type="ECO:0000250" key="1">
    <source>
        <dbReference type="UniProtKB" id="P25250"/>
    </source>
</evidence>
<evidence type="ECO:0000250" key="2">
    <source>
        <dbReference type="UniProtKB" id="P80884"/>
    </source>
</evidence>
<evidence type="ECO:0000255" key="3"/>
<evidence type="ECO:0000255" key="4">
    <source>
        <dbReference type="PROSITE-ProRule" id="PRU00498"/>
    </source>
</evidence>
<evidence type="ECO:0000255" key="5">
    <source>
        <dbReference type="PROSITE-ProRule" id="PRU10089"/>
    </source>
</evidence>
<evidence type="ECO:0000255" key="6">
    <source>
        <dbReference type="PROSITE-ProRule" id="PRU10090"/>
    </source>
</evidence>
<evidence type="ECO:0000269" key="7">
    <source>
    </source>
</evidence>
<evidence type="ECO:0000269" key="8">
    <source>
    </source>
</evidence>
<evidence type="ECO:0000305" key="9"/>
<keyword id="KW-0903">Direct protein sequencing</keyword>
<keyword id="KW-1015">Disulfide bond</keyword>
<keyword id="KW-0325">Glycoprotein</keyword>
<keyword id="KW-0378">Hydrolase</keyword>
<keyword id="KW-0645">Protease</keyword>
<keyword id="KW-1185">Reference proteome</keyword>
<keyword id="KW-0732">Signal</keyword>
<keyword id="KW-0788">Thiol protease</keyword>
<keyword id="KW-0926">Vacuole</keyword>
<keyword id="KW-0865">Zymogen</keyword>
<sequence length="379" mass="42794">MGFLVLLLFSLLGLSSSSSISTHRSILDLDLTKFTTQKQVSSLFQLWKSEHGRVYHNHEEEAKRLEIFKNNSNYIRDMNANRKSPHSHRLGLNKFADITPQEFSKKYLQAPKDVSQQIKMANKKMKKEQYSCDHPPASWDWRKKGVITQVKYQGGCGRGWAFSATGAIEAAHAIATGDLVSLSEQELVDCVEESEGSYNGWQYQSFEWVLEHGGIATDDDYPYRAKEGRCKANKIQDKVTIDGYETLIMSDESTESETEQAFLSAILEQPISVSIDAKDFHLYTGGIYDGENCTSPYGINHFVLLVGYGSADGVDYWIAKNSWGFDWGEDGYIWIQRNTGNLLGVCGMNYFASYPTKEESETLVSARVKGHRRVDHSPL</sequence>
<organism>
    <name type="scientific">Glycine max</name>
    <name type="common">Soybean</name>
    <name type="synonym">Glycine hispida</name>
    <dbReference type="NCBI Taxonomy" id="3847"/>
    <lineage>
        <taxon>Eukaryota</taxon>
        <taxon>Viridiplantae</taxon>
        <taxon>Streptophyta</taxon>
        <taxon>Embryophyta</taxon>
        <taxon>Tracheophyta</taxon>
        <taxon>Spermatophyta</taxon>
        <taxon>Magnoliopsida</taxon>
        <taxon>eudicotyledons</taxon>
        <taxon>Gunneridae</taxon>
        <taxon>Pentapetalae</taxon>
        <taxon>rosids</taxon>
        <taxon>fabids</taxon>
        <taxon>Fabales</taxon>
        <taxon>Fabaceae</taxon>
        <taxon>Papilionoideae</taxon>
        <taxon>50 kb inversion clade</taxon>
        <taxon>NPAAA clade</taxon>
        <taxon>indigoferoid/millettioid clade</taxon>
        <taxon>Phaseoleae</taxon>
        <taxon>Glycine</taxon>
        <taxon>Glycine subgen. Soja</taxon>
    </lineage>
</organism>
<comment type="function">
    <text>Probable thiol protease.</text>
</comment>
<comment type="subunit">
    <text evidence="9">Homodimer; disulfide-linked.</text>
</comment>
<comment type="subcellular location">
    <subcellularLocation>
        <location evidence="7">Vacuole</location>
    </subcellularLocation>
    <text>Protein storage vacuoles of seeds. This protein was wrongly thought to be associated with seed oil bodies.</text>
</comment>
<comment type="PTM">
    <text>N-glycosylated on its propeptide.</text>
</comment>
<comment type="similarity">
    <text evidence="6">Belongs to the peptidase C1 family.</text>
</comment>